<feature type="chain" id="PRO_0000425289" description="Protein LIGHT-DEPENDENT SHORT HYPOCOTYLS 2">
    <location>
        <begin position="1"/>
        <end position="201"/>
    </location>
</feature>
<feature type="domain" description="ALOG" evidence="2">
    <location>
        <begin position="33"/>
        <end position="160"/>
    </location>
</feature>
<feature type="region of interest" description="Disordered" evidence="3">
    <location>
        <begin position="1"/>
        <end position="37"/>
    </location>
</feature>
<feature type="region of interest" description="Disordered" evidence="3">
    <location>
        <begin position="151"/>
        <end position="201"/>
    </location>
</feature>
<feature type="short sequence motif" description="Nuclear localization signal" evidence="1">
    <location>
        <begin position="158"/>
        <end position="162"/>
    </location>
</feature>
<feature type="compositionally biased region" description="Polar residues" evidence="3">
    <location>
        <begin position="1"/>
        <end position="14"/>
    </location>
</feature>
<feature type="compositionally biased region" description="Low complexity" evidence="3">
    <location>
        <begin position="15"/>
        <end position="32"/>
    </location>
</feature>
<name>LSH2_ARATH</name>
<evidence type="ECO:0000250" key="1"/>
<evidence type="ECO:0000255" key="2">
    <source>
        <dbReference type="PROSITE-ProRule" id="PRU01033"/>
    </source>
</evidence>
<evidence type="ECO:0000256" key="3">
    <source>
        <dbReference type="SAM" id="MobiDB-lite"/>
    </source>
</evidence>
<evidence type="ECO:0000305" key="4"/>
<accession>Q9M836</accession>
<gene>
    <name type="primary">LSH2</name>
    <name type="synonym">OBO3</name>
    <name type="ordered locus">At3g04510</name>
    <name type="ORF">T27C4.16</name>
</gene>
<dbReference type="EMBL" id="AC022287">
    <property type="protein sequence ID" value="AAF63782.1"/>
    <property type="molecule type" value="Genomic_DNA"/>
</dbReference>
<dbReference type="EMBL" id="CP002686">
    <property type="protein sequence ID" value="AEE74090.1"/>
    <property type="molecule type" value="Genomic_DNA"/>
</dbReference>
<dbReference type="EMBL" id="AY630774">
    <property type="protein sequence ID" value="AAT67573.1"/>
    <property type="molecule type" value="mRNA"/>
</dbReference>
<dbReference type="EMBL" id="AY924763">
    <property type="protein sequence ID" value="AAX23838.1"/>
    <property type="molecule type" value="Genomic_DNA"/>
</dbReference>
<dbReference type="RefSeq" id="NP_187101.1">
    <property type="nucleotide sequence ID" value="NM_111322.3"/>
</dbReference>
<dbReference type="SMR" id="Q9M836"/>
<dbReference type="STRING" id="3702.Q9M836"/>
<dbReference type="PaxDb" id="3702-AT3G04510.1"/>
<dbReference type="ProteomicsDB" id="238500"/>
<dbReference type="EnsemblPlants" id="AT3G04510.1">
    <property type="protein sequence ID" value="AT3G04510.1"/>
    <property type="gene ID" value="AT3G04510"/>
</dbReference>
<dbReference type="GeneID" id="819607"/>
<dbReference type="Gramene" id="AT3G04510.1">
    <property type="protein sequence ID" value="AT3G04510.1"/>
    <property type="gene ID" value="AT3G04510"/>
</dbReference>
<dbReference type="KEGG" id="ath:AT3G04510"/>
<dbReference type="Araport" id="AT3G04510"/>
<dbReference type="TAIR" id="AT3G04510">
    <property type="gene designation" value="LSH2"/>
</dbReference>
<dbReference type="eggNOG" id="ENOG502QSQJ">
    <property type="taxonomic scope" value="Eukaryota"/>
</dbReference>
<dbReference type="HOGENOM" id="CLU_071168_1_1_1"/>
<dbReference type="InParanoid" id="Q9M836"/>
<dbReference type="OMA" id="VASPMIT"/>
<dbReference type="OrthoDB" id="1906822at2759"/>
<dbReference type="PhylomeDB" id="Q9M836"/>
<dbReference type="PRO" id="PR:Q9M836"/>
<dbReference type="Proteomes" id="UP000006548">
    <property type="component" value="Chromosome 3"/>
</dbReference>
<dbReference type="ExpressionAtlas" id="Q9M836">
    <property type="expression patterns" value="baseline and differential"/>
</dbReference>
<dbReference type="GO" id="GO:0005634">
    <property type="term" value="C:nucleus"/>
    <property type="evidence" value="ECO:0000250"/>
    <property type="project" value="UniProtKB"/>
</dbReference>
<dbReference type="GO" id="GO:0003677">
    <property type="term" value="F:DNA binding"/>
    <property type="evidence" value="ECO:0007669"/>
    <property type="project" value="UniProtKB-KW"/>
</dbReference>
<dbReference type="GO" id="GO:0009299">
    <property type="term" value="P:mRNA transcription"/>
    <property type="evidence" value="ECO:0000250"/>
    <property type="project" value="UniProtKB"/>
</dbReference>
<dbReference type="GO" id="GO:0090698">
    <property type="term" value="P:post-embryonic plant morphogenesis"/>
    <property type="evidence" value="ECO:0000250"/>
    <property type="project" value="UniProtKB"/>
</dbReference>
<dbReference type="InterPro" id="IPR040222">
    <property type="entry name" value="ALOG"/>
</dbReference>
<dbReference type="InterPro" id="IPR006936">
    <property type="entry name" value="ALOG_dom"/>
</dbReference>
<dbReference type="PANTHER" id="PTHR31165">
    <property type="entry name" value="PROTEIN G1-LIKE2"/>
    <property type="match status" value="1"/>
</dbReference>
<dbReference type="PANTHER" id="PTHR31165:SF49">
    <property type="entry name" value="PROTEIN LIGHT-DEPENDENT SHORT HYPOCOTYLS 2"/>
    <property type="match status" value="1"/>
</dbReference>
<dbReference type="Pfam" id="PF04852">
    <property type="entry name" value="ALOG_dom"/>
    <property type="match status" value="1"/>
</dbReference>
<dbReference type="PROSITE" id="PS51697">
    <property type="entry name" value="ALOG"/>
    <property type="match status" value="1"/>
</dbReference>
<sequence length="201" mass="22774">MDLISQNHNNRNPNTSLSTQTPSSFSSPPSSSRYENQKRRDWNTFCQYLRNHHPPLSLASCSGAHVLDFLRYLDQFGKTKVHHQNCAFFGLPNPPAPCPCPLRQAWGSLDALIGRLRAAYEENGGAPETSPFGSRSVRIFLREVRDFQAKSRGVSYEKKRKRVNNKQITQSQPQSQPPLPQQPQQEQGQSMMANYHHGATQ</sequence>
<comment type="function">
    <text evidence="1">Probable transcription regulator that acts as a developmental regulator by promoting cell growth in response to light.</text>
</comment>
<comment type="subcellular location">
    <subcellularLocation>
        <location evidence="1">Nucleus</location>
    </subcellularLocation>
</comment>
<comment type="similarity">
    <text evidence="4">Belongs to the plant homeotic and developmental regulators ALOG protein family.</text>
</comment>
<protein>
    <recommendedName>
        <fullName>Protein LIGHT-DEPENDENT SHORT HYPOCOTYLS 2</fullName>
    </recommendedName>
    <alternativeName>
        <fullName>Protein ORGAN BOUNDARY 3</fullName>
    </alternativeName>
</protein>
<proteinExistence type="evidence at protein level"/>
<reference key="1">
    <citation type="journal article" date="2000" name="Nature">
        <title>Sequence and analysis of chromosome 3 of the plant Arabidopsis thaliana.</title>
        <authorList>
            <person name="Salanoubat M."/>
            <person name="Lemcke K."/>
            <person name="Rieger M."/>
            <person name="Ansorge W."/>
            <person name="Unseld M."/>
            <person name="Fartmann B."/>
            <person name="Valle G."/>
            <person name="Bloecker H."/>
            <person name="Perez-Alonso M."/>
            <person name="Obermaier B."/>
            <person name="Delseny M."/>
            <person name="Boutry M."/>
            <person name="Grivell L.A."/>
            <person name="Mache R."/>
            <person name="Puigdomenech P."/>
            <person name="De Simone V."/>
            <person name="Choisne N."/>
            <person name="Artiguenave F."/>
            <person name="Robert C."/>
            <person name="Brottier P."/>
            <person name="Wincker P."/>
            <person name="Cattolico L."/>
            <person name="Weissenbach J."/>
            <person name="Saurin W."/>
            <person name="Quetier F."/>
            <person name="Schaefer M."/>
            <person name="Mueller-Auer S."/>
            <person name="Gabel C."/>
            <person name="Fuchs M."/>
            <person name="Benes V."/>
            <person name="Wurmbach E."/>
            <person name="Drzonek H."/>
            <person name="Erfle H."/>
            <person name="Jordan N."/>
            <person name="Bangert S."/>
            <person name="Wiedelmann R."/>
            <person name="Kranz H."/>
            <person name="Voss H."/>
            <person name="Holland R."/>
            <person name="Brandt P."/>
            <person name="Nyakatura G."/>
            <person name="Vezzi A."/>
            <person name="D'Angelo M."/>
            <person name="Pallavicini A."/>
            <person name="Toppo S."/>
            <person name="Simionati B."/>
            <person name="Conrad A."/>
            <person name="Hornischer K."/>
            <person name="Kauer G."/>
            <person name="Loehnert T.-H."/>
            <person name="Nordsiek G."/>
            <person name="Reichelt J."/>
            <person name="Scharfe M."/>
            <person name="Schoen O."/>
            <person name="Bargues M."/>
            <person name="Terol J."/>
            <person name="Climent J."/>
            <person name="Navarro P."/>
            <person name="Collado C."/>
            <person name="Perez-Perez A."/>
            <person name="Ottenwaelder B."/>
            <person name="Duchemin D."/>
            <person name="Cooke R."/>
            <person name="Laudie M."/>
            <person name="Berger-Llauro C."/>
            <person name="Purnelle B."/>
            <person name="Masuy D."/>
            <person name="de Haan M."/>
            <person name="Maarse A.C."/>
            <person name="Alcaraz J.-P."/>
            <person name="Cottet A."/>
            <person name="Casacuberta E."/>
            <person name="Monfort A."/>
            <person name="Argiriou A."/>
            <person name="Flores M."/>
            <person name="Liguori R."/>
            <person name="Vitale D."/>
            <person name="Mannhaupt G."/>
            <person name="Haase D."/>
            <person name="Schoof H."/>
            <person name="Rudd S."/>
            <person name="Zaccaria P."/>
            <person name="Mewes H.-W."/>
            <person name="Mayer K.F.X."/>
            <person name="Kaul S."/>
            <person name="Town C.D."/>
            <person name="Koo H.L."/>
            <person name="Tallon L.J."/>
            <person name="Jenkins J."/>
            <person name="Rooney T."/>
            <person name="Rizzo M."/>
            <person name="Walts A."/>
            <person name="Utterback T."/>
            <person name="Fujii C.Y."/>
            <person name="Shea T.P."/>
            <person name="Creasy T.H."/>
            <person name="Haas B."/>
            <person name="Maiti R."/>
            <person name="Wu D."/>
            <person name="Peterson J."/>
            <person name="Van Aken S."/>
            <person name="Pai G."/>
            <person name="Militscher J."/>
            <person name="Sellers P."/>
            <person name="Gill J.E."/>
            <person name="Feldblyum T.V."/>
            <person name="Preuss D."/>
            <person name="Lin X."/>
            <person name="Nierman W.C."/>
            <person name="Salzberg S.L."/>
            <person name="White O."/>
            <person name="Venter J.C."/>
            <person name="Fraser C.M."/>
            <person name="Kaneko T."/>
            <person name="Nakamura Y."/>
            <person name="Sato S."/>
            <person name="Kato T."/>
            <person name="Asamizu E."/>
            <person name="Sasamoto S."/>
            <person name="Kimura T."/>
            <person name="Idesawa K."/>
            <person name="Kawashima K."/>
            <person name="Kishida Y."/>
            <person name="Kiyokawa C."/>
            <person name="Kohara M."/>
            <person name="Matsumoto M."/>
            <person name="Matsuno A."/>
            <person name="Muraki A."/>
            <person name="Nakayama S."/>
            <person name="Nakazaki N."/>
            <person name="Shinpo S."/>
            <person name="Takeuchi C."/>
            <person name="Wada T."/>
            <person name="Watanabe A."/>
            <person name="Yamada M."/>
            <person name="Yasuda M."/>
            <person name="Tabata S."/>
        </authorList>
    </citation>
    <scope>NUCLEOTIDE SEQUENCE [LARGE SCALE GENOMIC DNA]</scope>
    <source>
        <strain>cv. Columbia</strain>
    </source>
</reference>
<reference key="2">
    <citation type="journal article" date="2017" name="Plant J.">
        <title>Araport11: a complete reannotation of the Arabidopsis thaliana reference genome.</title>
        <authorList>
            <person name="Cheng C.Y."/>
            <person name="Krishnakumar V."/>
            <person name="Chan A.P."/>
            <person name="Thibaud-Nissen F."/>
            <person name="Schobel S."/>
            <person name="Town C.D."/>
        </authorList>
    </citation>
    <scope>GENOME REANNOTATION</scope>
    <source>
        <strain>cv. Columbia</strain>
    </source>
</reference>
<reference key="3">
    <citation type="journal article" date="2005" name="Plant Physiol.">
        <title>Analysis of the cDNAs of hypothetical genes on Arabidopsis chromosome 2 reveals numerous transcript variants.</title>
        <authorList>
            <person name="Xiao Y.-L."/>
            <person name="Smith S.R."/>
            <person name="Ishmael N."/>
            <person name="Redman J.C."/>
            <person name="Kumar N."/>
            <person name="Monaghan E.L."/>
            <person name="Ayele M."/>
            <person name="Haas B.J."/>
            <person name="Wu H.C."/>
            <person name="Town C.D."/>
        </authorList>
    </citation>
    <scope>NUCLEOTIDE SEQUENCE [LARGE SCALE MRNA]</scope>
    <source>
        <strain>cv. Columbia</strain>
    </source>
</reference>
<reference key="4">
    <citation type="submission" date="2005-02" db="EMBL/GenBank/DDBJ databases">
        <authorList>
            <person name="Underwood B.A."/>
            <person name="Xiao Y.-L."/>
            <person name="Moskal W.A. Jr."/>
            <person name="Monaghan E.L."/>
            <person name="Wang W."/>
            <person name="Redman J.C."/>
            <person name="Wu H.C."/>
            <person name="Utterback T."/>
            <person name="Town C.D."/>
        </authorList>
    </citation>
    <scope>NUCLEOTIDE SEQUENCE [LARGE SCALE GENOMIC DNA]</scope>
    <source>
        <strain>cv. Columbia</strain>
    </source>
</reference>
<reference key="5">
    <citation type="journal article" date="2004" name="Plant J.">
        <title>Overexpression of LSH1, a member of an uncharacterised gene family, causes enhanced light regulation of seedling development.</title>
        <authorList>
            <person name="Zhao L."/>
            <person name="Nakazawa M."/>
            <person name="Takase T."/>
            <person name="Manabe K."/>
            <person name="Kobayashi M."/>
            <person name="Seki M."/>
            <person name="Shinozaki K."/>
            <person name="Matsui M."/>
        </authorList>
    </citation>
    <scope>GENE FAMILY</scope>
    <scope>NOMENCLATURE</scope>
    <source>
        <strain>cv. Columbia</strain>
    </source>
</reference>
<reference key="6">
    <citation type="journal article" date="2011" name="Proc. Natl. Acad. Sci. U.S.A.">
        <title>Organ boundary1 defines a gene expressed at the junction between the shoot apical meristem and lateral organs.</title>
        <authorList>
            <person name="Cho E."/>
            <person name="Zambryski P.C."/>
        </authorList>
    </citation>
    <scope>GENE FAMILY</scope>
</reference>
<reference key="7">
    <citation type="journal article" date="2012" name="Biol. Direct">
        <title>ALOG domains: provenance of plant homeotic and developmental regulators from the DNA-binding domain of a novel class of DIRS1-type retroposons.</title>
        <authorList>
            <person name="Iyer L.M."/>
            <person name="Aravind L."/>
        </authorList>
    </citation>
    <scope>DNA-BINDING</scope>
    <scope>GENE FAMILY</scope>
</reference>
<keyword id="KW-0217">Developmental protein</keyword>
<keyword id="KW-0238">DNA-binding</keyword>
<keyword id="KW-0539">Nucleus</keyword>
<keyword id="KW-1185">Reference proteome</keyword>
<keyword id="KW-0804">Transcription</keyword>
<keyword id="KW-0805">Transcription regulation</keyword>
<organism>
    <name type="scientific">Arabidopsis thaliana</name>
    <name type="common">Mouse-ear cress</name>
    <dbReference type="NCBI Taxonomy" id="3702"/>
    <lineage>
        <taxon>Eukaryota</taxon>
        <taxon>Viridiplantae</taxon>
        <taxon>Streptophyta</taxon>
        <taxon>Embryophyta</taxon>
        <taxon>Tracheophyta</taxon>
        <taxon>Spermatophyta</taxon>
        <taxon>Magnoliopsida</taxon>
        <taxon>eudicotyledons</taxon>
        <taxon>Gunneridae</taxon>
        <taxon>Pentapetalae</taxon>
        <taxon>rosids</taxon>
        <taxon>malvids</taxon>
        <taxon>Brassicales</taxon>
        <taxon>Brassicaceae</taxon>
        <taxon>Camelineae</taxon>
        <taxon>Arabidopsis</taxon>
    </lineage>
</organism>